<evidence type="ECO:0000255" key="1"/>
<evidence type="ECO:0000305" key="2"/>
<evidence type="ECO:0000305" key="3">
    <source>
    </source>
</evidence>
<keyword id="KW-0472">Membrane</keyword>
<keyword id="KW-0812">Transmembrane</keyword>
<keyword id="KW-1133">Transmembrane helix</keyword>
<sequence>MKIRPGENLSRLTNMKKLSQNLIHNVTSIMTVSDINYLLLYLIILLTLSIKQPEKKNRKERTSCILSYYRIASLSMQNGGVPLCFVVLDCRLDSVFCKHGTMQFYWRKT</sequence>
<comment type="subcellular location">
    <subcellularLocation>
        <location evidence="2">Membrane</location>
        <topology evidence="2">Single-pass membrane protein</topology>
    </subcellularLocation>
</comment>
<comment type="miscellaneous">
    <text evidence="2">Partially overlaps ISU2.</text>
</comment>
<comment type="caution">
    <text evidence="3">Product of a dubious gene prediction unlikely to encode a functional protein. Because of that it is not part of the S.cerevisiae S288c complete/reference proteome set.</text>
</comment>
<proteinExistence type="uncertain"/>
<gene>
    <name type="ordered locus">YOR225W</name>
    <name type="ORF">O5015</name>
    <name type="ORF">O5073</name>
    <name type="ORF">YOR50-15</name>
</gene>
<dbReference type="EMBL" id="X92441">
    <property type="protein sequence ID" value="CAA63188.1"/>
    <property type="molecule type" value="Genomic_DNA"/>
</dbReference>
<dbReference type="EMBL" id="Z75133">
    <property type="protein sequence ID" value="CAA99444.1"/>
    <property type="molecule type" value="Genomic_DNA"/>
</dbReference>
<dbReference type="PIR" id="S60952">
    <property type="entry name" value="S60952"/>
</dbReference>
<dbReference type="DIP" id="DIP-5560N"/>
<dbReference type="IntAct" id="Q12225">
    <property type="interactions" value="2"/>
</dbReference>
<dbReference type="PaxDb" id="4932-YOR225W"/>
<dbReference type="EnsemblFungi" id="YOR225W_mRNA">
    <property type="protein sequence ID" value="YOR225W"/>
    <property type="gene ID" value="YOR225W"/>
</dbReference>
<dbReference type="AGR" id="SGD:S000005751"/>
<dbReference type="SGD" id="S000005751">
    <property type="gene designation" value="YOR225W"/>
</dbReference>
<dbReference type="HOGENOM" id="CLU_2186035_0_0_1"/>
<dbReference type="GO" id="GO:0016020">
    <property type="term" value="C:membrane"/>
    <property type="evidence" value="ECO:0007669"/>
    <property type="project" value="UniProtKB-SubCell"/>
</dbReference>
<reference key="1">
    <citation type="journal article" date="1996" name="Yeast">
        <title>Sequence and analysis of a 33 kb fragment from the right arm of chromosome XV of the yeast Saccharomyces cerevisiae.</title>
        <authorList>
            <person name="Galisson F."/>
            <person name="Dujon B."/>
        </authorList>
    </citation>
    <scope>NUCLEOTIDE SEQUENCE [GENOMIC DNA]</scope>
    <source>
        <strain>ATCC 96604 / S288c / FY1679</strain>
    </source>
</reference>
<reference key="2">
    <citation type="journal article" date="1997" name="Nature">
        <title>The nucleotide sequence of Saccharomyces cerevisiae chromosome XV.</title>
        <authorList>
            <person name="Dujon B."/>
            <person name="Albermann K."/>
            <person name="Aldea M."/>
            <person name="Alexandraki D."/>
            <person name="Ansorge W."/>
            <person name="Arino J."/>
            <person name="Benes V."/>
            <person name="Bohn C."/>
            <person name="Bolotin-Fukuhara M."/>
            <person name="Bordonne R."/>
            <person name="Boyer J."/>
            <person name="Camasses A."/>
            <person name="Casamayor A."/>
            <person name="Casas C."/>
            <person name="Cheret G."/>
            <person name="Cziepluch C."/>
            <person name="Daignan-Fornier B."/>
            <person name="Dang V.-D."/>
            <person name="de Haan M."/>
            <person name="Delius H."/>
            <person name="Durand P."/>
            <person name="Fairhead C."/>
            <person name="Feldmann H."/>
            <person name="Gaillon L."/>
            <person name="Galisson F."/>
            <person name="Gamo F.-J."/>
            <person name="Gancedo C."/>
            <person name="Goffeau A."/>
            <person name="Goulding S.E."/>
            <person name="Grivell L.A."/>
            <person name="Habbig B."/>
            <person name="Hand N.J."/>
            <person name="Hani J."/>
            <person name="Hattenhorst U."/>
            <person name="Hebling U."/>
            <person name="Hernando Y."/>
            <person name="Herrero E."/>
            <person name="Heumann K."/>
            <person name="Hiesel R."/>
            <person name="Hilger F."/>
            <person name="Hofmann B."/>
            <person name="Hollenberg C.P."/>
            <person name="Hughes B."/>
            <person name="Jauniaux J.-C."/>
            <person name="Kalogeropoulos A."/>
            <person name="Katsoulou C."/>
            <person name="Kordes E."/>
            <person name="Lafuente M.J."/>
            <person name="Landt O."/>
            <person name="Louis E.J."/>
            <person name="Maarse A.C."/>
            <person name="Madania A."/>
            <person name="Mannhaupt G."/>
            <person name="Marck C."/>
            <person name="Martin R.P."/>
            <person name="Mewes H.-W."/>
            <person name="Michaux G."/>
            <person name="Paces V."/>
            <person name="Parle-McDermott A.G."/>
            <person name="Pearson B.M."/>
            <person name="Perrin A."/>
            <person name="Pettersson B."/>
            <person name="Poch O."/>
            <person name="Pohl T.M."/>
            <person name="Poirey R."/>
            <person name="Portetelle D."/>
            <person name="Pujol A."/>
            <person name="Purnelle B."/>
            <person name="Ramezani Rad M."/>
            <person name="Rechmann S."/>
            <person name="Schwager C."/>
            <person name="Schweizer M."/>
            <person name="Sor F."/>
            <person name="Sterky F."/>
            <person name="Tarassov I.A."/>
            <person name="Teodoru C."/>
            <person name="Tettelin H."/>
            <person name="Thierry A."/>
            <person name="Tobiasch E."/>
            <person name="Tzermia M."/>
            <person name="Uhlen M."/>
            <person name="Unseld M."/>
            <person name="Valens M."/>
            <person name="Vandenbol M."/>
            <person name="Vetter I."/>
            <person name="Vlcek C."/>
            <person name="Voet M."/>
            <person name="Volckaert G."/>
            <person name="Voss H."/>
            <person name="Wambutt R."/>
            <person name="Wedler H."/>
            <person name="Wiemann S."/>
            <person name="Winsor B."/>
            <person name="Wolfe K.H."/>
            <person name="Zollner A."/>
            <person name="Zumstein E."/>
            <person name="Kleine K."/>
        </authorList>
    </citation>
    <scope>NUCLEOTIDE SEQUENCE [LARGE SCALE GENOMIC DNA]</scope>
    <source>
        <strain>ATCC 204508 / S288c</strain>
    </source>
</reference>
<reference key="3">
    <citation type="journal article" date="2014" name="G3 (Bethesda)">
        <title>The reference genome sequence of Saccharomyces cerevisiae: Then and now.</title>
        <authorList>
            <person name="Engel S.R."/>
            <person name="Dietrich F.S."/>
            <person name="Fisk D.G."/>
            <person name="Binkley G."/>
            <person name="Balakrishnan R."/>
            <person name="Costanzo M.C."/>
            <person name="Dwight S.S."/>
            <person name="Hitz B.C."/>
            <person name="Karra K."/>
            <person name="Nash R.S."/>
            <person name="Weng S."/>
            <person name="Wong E.D."/>
            <person name="Lloyd P."/>
            <person name="Skrzypek M.S."/>
            <person name="Miyasato S.R."/>
            <person name="Simison M."/>
            <person name="Cherry J.M."/>
        </authorList>
    </citation>
    <scope>GENOME REANNOTATION</scope>
    <source>
        <strain>ATCC 204508 / S288c</strain>
    </source>
</reference>
<feature type="chain" id="PRO_0000299726" description="Putative uncharacterized protein YOR225W">
    <location>
        <begin position="1"/>
        <end position="109"/>
    </location>
</feature>
<feature type="transmembrane region" description="Helical" evidence="1">
    <location>
        <begin position="26"/>
        <end position="48"/>
    </location>
</feature>
<protein>
    <recommendedName>
        <fullName>Putative uncharacterized protein YOR225W</fullName>
    </recommendedName>
</protein>
<accession>Q12225</accession>
<organism>
    <name type="scientific">Saccharomyces cerevisiae (strain ATCC 204508 / S288c)</name>
    <name type="common">Baker's yeast</name>
    <dbReference type="NCBI Taxonomy" id="559292"/>
    <lineage>
        <taxon>Eukaryota</taxon>
        <taxon>Fungi</taxon>
        <taxon>Dikarya</taxon>
        <taxon>Ascomycota</taxon>
        <taxon>Saccharomycotina</taxon>
        <taxon>Saccharomycetes</taxon>
        <taxon>Saccharomycetales</taxon>
        <taxon>Saccharomycetaceae</taxon>
        <taxon>Saccharomyces</taxon>
    </lineage>
</organism>
<name>YO225_YEAST</name>